<evidence type="ECO:0000250" key="1">
    <source>
        <dbReference type="UniProtKB" id="Q7M724"/>
    </source>
</evidence>
<evidence type="ECO:0000255" key="2"/>
<evidence type="ECO:0000305" key="3"/>
<evidence type="ECO:0000312" key="4">
    <source>
        <dbReference type="EMBL" id="AAR13348.1"/>
    </source>
</evidence>
<proteinExistence type="inferred from homology"/>
<reference evidence="4" key="1">
    <citation type="submission" date="2003-08" db="EMBL/GenBank/DDBJ databases">
        <title>Identification of new putative rat taste receptors belonging to the T2R family.</title>
        <authorList>
            <person name="Conte C."/>
            <person name="Ebeling M."/>
            <person name="Marcuz A."/>
            <person name="Andres-Barquin P.J."/>
        </authorList>
    </citation>
    <scope>NUCLEOTIDE SEQUENCE [GENOMIC DNA]</scope>
    <source>
        <strain evidence="4">Sprague-Dawley</strain>
    </source>
</reference>
<accession>Q67ET1</accession>
<sequence length="307" mass="35326">MLTIPEGILLCFITSGSVLGVLGNGFILHVNCTDCVRQKFSTTGFIFTGLAISRICVICIIISDGYLKLFSPHMVASDAHIIGISYLWIITNHTSTCFATILNLFYFLKIANFSHYIFFCLKRKLNTIFIFLLGCLFISWSVAFPQTVKIFNDKMKHRNTSWKFHLHKSKFIINHILLNLGVIFFCMVAIITSFLLIISLWKHNRKMQLYVSRFKSLNTEVHLKVMKVLISFIILLILHVIGILIETLSFLRYENKLLLILGLNFSSMYPCCHSFILILANNQLKQASLKALKQFKCHKKDKDVRET</sequence>
<gene>
    <name evidence="1" type="primary">Tas2r106</name>
    <name type="synonym">Tas2r19</name>
</gene>
<protein>
    <recommendedName>
        <fullName>Taste receptor type 2 member 106</fullName>
        <shortName>T2R106</shortName>
    </recommendedName>
    <alternativeName>
        <fullName>Taste receptor type 2 member 19</fullName>
        <shortName>T2R19</shortName>
    </alternativeName>
</protein>
<name>TR106_RAT</name>
<dbReference type="EMBL" id="AY362739">
    <property type="protein sequence ID" value="AAR13348.1"/>
    <property type="molecule type" value="Genomic_DNA"/>
</dbReference>
<dbReference type="RefSeq" id="NP_001160152.1">
    <property type="nucleotide sequence ID" value="NM_001166680.1"/>
</dbReference>
<dbReference type="SMR" id="Q67ET1"/>
<dbReference type="FunCoup" id="Q67ET1">
    <property type="interactions" value="80"/>
</dbReference>
<dbReference type="STRING" id="10116.ENSRNOP00000051235"/>
<dbReference type="GlyCosmos" id="Q67ET1">
    <property type="glycosylation" value="1 site, No reported glycans"/>
</dbReference>
<dbReference type="GlyGen" id="Q67ET1">
    <property type="glycosylation" value="1 site"/>
</dbReference>
<dbReference type="PhosphoSitePlus" id="Q67ET1"/>
<dbReference type="PaxDb" id="10116-ENSRNOP00000051235"/>
<dbReference type="Ensembl" id="ENSRNOT00000044029.2">
    <property type="protein sequence ID" value="ENSRNOP00000051235.1"/>
    <property type="gene ID" value="ENSRNOG00000031185.2"/>
</dbReference>
<dbReference type="GeneID" id="100310878"/>
<dbReference type="KEGG" id="rno:100310878"/>
<dbReference type="UCSC" id="RGD:2314260">
    <property type="organism name" value="rat"/>
</dbReference>
<dbReference type="AGR" id="RGD:2314260"/>
<dbReference type="CTD" id="387341"/>
<dbReference type="RGD" id="2314260">
    <property type="gene designation" value="Tas2r106"/>
</dbReference>
<dbReference type="eggNOG" id="ENOG502T3AX">
    <property type="taxonomic scope" value="Eukaryota"/>
</dbReference>
<dbReference type="GeneTree" id="ENSGT01100000263477"/>
<dbReference type="HOGENOM" id="CLU_072337_3_0_1"/>
<dbReference type="InParanoid" id="Q67ET1"/>
<dbReference type="OMA" id="SHYIFFC"/>
<dbReference type="OrthoDB" id="8876749at2759"/>
<dbReference type="PhylomeDB" id="Q67ET1"/>
<dbReference type="TreeFam" id="TF335891"/>
<dbReference type="Reactome" id="R-RNO-418594">
    <property type="pathway name" value="G alpha (i) signalling events"/>
</dbReference>
<dbReference type="Reactome" id="R-RNO-420499">
    <property type="pathway name" value="Class C/3 (Metabotropic glutamate/pheromone receptors)"/>
</dbReference>
<dbReference type="Reactome" id="R-RNO-9717207">
    <property type="pathway name" value="Sensory perception of sweet, bitter, and umami (glutamate) taste"/>
</dbReference>
<dbReference type="PRO" id="PR:Q67ET1"/>
<dbReference type="Proteomes" id="UP000002494">
    <property type="component" value="Chromosome 4"/>
</dbReference>
<dbReference type="GO" id="GO:0016020">
    <property type="term" value="C:membrane"/>
    <property type="evidence" value="ECO:0000318"/>
    <property type="project" value="GO_Central"/>
</dbReference>
<dbReference type="GO" id="GO:0033038">
    <property type="term" value="F:bitter taste receptor activity"/>
    <property type="evidence" value="ECO:0000266"/>
    <property type="project" value="RGD"/>
</dbReference>
<dbReference type="GO" id="GO:0004930">
    <property type="term" value="F:G protein-coupled receptor activity"/>
    <property type="evidence" value="ECO:0007669"/>
    <property type="project" value="UniProtKB-KW"/>
</dbReference>
<dbReference type="GO" id="GO:0001580">
    <property type="term" value="P:detection of chemical stimulus involved in sensory perception of bitter taste"/>
    <property type="evidence" value="ECO:0000266"/>
    <property type="project" value="RGD"/>
</dbReference>
<dbReference type="Gene3D" id="1.20.1070.10">
    <property type="entry name" value="Rhodopsin 7-helix transmembrane proteins"/>
    <property type="match status" value="1"/>
</dbReference>
<dbReference type="InterPro" id="IPR007960">
    <property type="entry name" value="TAS2R"/>
</dbReference>
<dbReference type="PANTHER" id="PTHR11394">
    <property type="entry name" value="TASTE RECEPTOR TYPE 2"/>
    <property type="match status" value="1"/>
</dbReference>
<dbReference type="PANTHER" id="PTHR11394:SF140">
    <property type="entry name" value="TASTE RECEPTOR TYPE 2 MEMBER 106"/>
    <property type="match status" value="1"/>
</dbReference>
<dbReference type="Pfam" id="PF05296">
    <property type="entry name" value="TAS2R"/>
    <property type="match status" value="1"/>
</dbReference>
<dbReference type="SUPFAM" id="SSF81321">
    <property type="entry name" value="Family A G protein-coupled receptor-like"/>
    <property type="match status" value="1"/>
</dbReference>
<comment type="function">
    <text evidence="3">Putative taste receptor which may play a role in the perception of bitterness.</text>
</comment>
<comment type="subcellular location">
    <subcellularLocation>
        <location evidence="3">Membrane</location>
        <topology evidence="3">Multi-pass membrane protein</topology>
    </subcellularLocation>
</comment>
<comment type="miscellaneous">
    <text evidence="3">Several bitter taste receptors are expressed in a single taste receptor cell.</text>
</comment>
<comment type="similarity">
    <text evidence="2">Belongs to the G-protein coupled receptor T2R family.</text>
</comment>
<feature type="chain" id="PRO_0000248251" description="Taste receptor type 2 member 106">
    <location>
        <begin position="1"/>
        <end position="307"/>
    </location>
</feature>
<feature type="topological domain" description="Extracellular" evidence="2">
    <location>
        <begin position="1"/>
        <end position="7"/>
    </location>
</feature>
<feature type="transmembrane region" description="Helical; Name=1" evidence="2">
    <location>
        <begin position="8"/>
        <end position="28"/>
    </location>
</feature>
<feature type="topological domain" description="Cytoplasmic" evidence="2">
    <location>
        <begin position="29"/>
        <end position="41"/>
    </location>
</feature>
<feature type="transmembrane region" description="Helical; Name=2" evidence="2">
    <location>
        <begin position="42"/>
        <end position="62"/>
    </location>
</feature>
<feature type="topological domain" description="Extracellular" evidence="2">
    <location>
        <begin position="63"/>
        <end position="81"/>
    </location>
</feature>
<feature type="transmembrane region" description="Helical; Name=3" evidence="2">
    <location>
        <begin position="82"/>
        <end position="104"/>
    </location>
</feature>
<feature type="topological domain" description="Cytoplasmic" evidence="2">
    <location>
        <begin position="105"/>
        <end position="124"/>
    </location>
</feature>
<feature type="transmembrane region" description="Helical; Name=4" evidence="2">
    <location>
        <begin position="125"/>
        <end position="145"/>
    </location>
</feature>
<feature type="topological domain" description="Extracellular" evidence="2">
    <location>
        <begin position="146"/>
        <end position="179"/>
    </location>
</feature>
<feature type="transmembrane region" description="Helical; Name=5" evidence="2">
    <location>
        <begin position="180"/>
        <end position="200"/>
    </location>
</feature>
<feature type="topological domain" description="Cytoplasmic" evidence="2">
    <location>
        <begin position="201"/>
        <end position="227"/>
    </location>
</feature>
<feature type="transmembrane region" description="Helical; Name=6" evidence="2">
    <location>
        <begin position="228"/>
        <end position="248"/>
    </location>
</feature>
<feature type="topological domain" description="Extracellular" evidence="2">
    <location>
        <begin position="249"/>
        <end position="257"/>
    </location>
</feature>
<feature type="transmembrane region" description="Helical; Name=7" evidence="2">
    <location>
        <begin position="258"/>
        <end position="278"/>
    </location>
</feature>
<feature type="topological domain" description="Cytoplasmic" evidence="2">
    <location>
        <begin position="279"/>
        <end position="307"/>
    </location>
</feature>
<feature type="glycosylation site" description="N-linked (GlcNAc...) asparagine" evidence="2">
    <location>
        <position position="159"/>
    </location>
</feature>
<keyword id="KW-0297">G-protein coupled receptor</keyword>
<keyword id="KW-0325">Glycoprotein</keyword>
<keyword id="KW-0472">Membrane</keyword>
<keyword id="KW-0675">Receptor</keyword>
<keyword id="KW-1185">Reference proteome</keyword>
<keyword id="KW-0716">Sensory transduction</keyword>
<keyword id="KW-0919">Taste</keyword>
<keyword id="KW-0807">Transducer</keyword>
<keyword id="KW-0812">Transmembrane</keyword>
<keyword id="KW-1133">Transmembrane helix</keyword>
<organism>
    <name type="scientific">Rattus norvegicus</name>
    <name type="common">Rat</name>
    <dbReference type="NCBI Taxonomy" id="10116"/>
    <lineage>
        <taxon>Eukaryota</taxon>
        <taxon>Metazoa</taxon>
        <taxon>Chordata</taxon>
        <taxon>Craniata</taxon>
        <taxon>Vertebrata</taxon>
        <taxon>Euteleostomi</taxon>
        <taxon>Mammalia</taxon>
        <taxon>Eutheria</taxon>
        <taxon>Euarchontoglires</taxon>
        <taxon>Glires</taxon>
        <taxon>Rodentia</taxon>
        <taxon>Myomorpha</taxon>
        <taxon>Muroidea</taxon>
        <taxon>Muridae</taxon>
        <taxon>Murinae</taxon>
        <taxon>Rattus</taxon>
    </lineage>
</organism>